<sequence length="640" mass="69918">MSRTLTPLLDRVCEPQDLRAFPESDLARLADELRAETIDVVSVTGGHLGAGLGVIELTVALHYVFNTPEDRIIWDVGHQAYPHKILTGRREKIRTLRQEGGLSGFTKRSESVYDPFGAGHSSTSISAGLGMAVASALKAEKRRNIVAVIGDGAMSAGMAYEAMNNAGALNARLIVVLNDNDMSIAPPTGAMSAHLARLVSRPAYRSLRERVKVLGEKLPKFFLDKARRSEEFARGFLVGGTLFEELGFYYVGPIDGHNLKHLLPVLKNVREYPTGPVLIHVVTHKGKGYAPAEASLDKYHGVNRFDIITGKQVKASSNVLPYTKVFSKALREEASYDDKIVAITAAMPTGTGLDFFAEKFPERMFDVGIAEQHAVTFAAGMACEGYKPFVAIYSTFLQRAYDQIIHDVSIQKLPVRFAIDRAGFVGADGATHAGSFDIVFLTTLPEFVVMAPSDEVELMHMVRTAAAYDQGPISFRYPRGEGIGMDLPQRGEILEIGKGRILHEGNRIALVCFGTRISEVLVAADELSAEGLSTTVADARFAKPLDKDLMRRLAREHEVLVTIEEGAIGGFGAHLLQFLAQEGLLEHGLKVRTLKLPDEYLNHGSQEKVLSRIGLDAVGIVNTVFSALGRKIRTVQRVRV</sequence>
<proteinExistence type="inferred from homology"/>
<feature type="chain" id="PRO_0000256380" description="1-deoxy-D-xylulose-5-phosphate synthase">
    <location>
        <begin position="1"/>
        <end position="640"/>
    </location>
</feature>
<feature type="binding site" evidence="1">
    <location>
        <position position="78"/>
    </location>
    <ligand>
        <name>thiamine diphosphate</name>
        <dbReference type="ChEBI" id="CHEBI:58937"/>
    </ligand>
</feature>
<feature type="binding site" evidence="1">
    <location>
        <begin position="119"/>
        <end position="121"/>
    </location>
    <ligand>
        <name>thiamine diphosphate</name>
        <dbReference type="ChEBI" id="CHEBI:58937"/>
    </ligand>
</feature>
<feature type="binding site" evidence="1">
    <location>
        <position position="151"/>
    </location>
    <ligand>
        <name>Mg(2+)</name>
        <dbReference type="ChEBI" id="CHEBI:18420"/>
    </ligand>
</feature>
<feature type="binding site" evidence="1">
    <location>
        <begin position="152"/>
        <end position="153"/>
    </location>
    <ligand>
        <name>thiamine diphosphate</name>
        <dbReference type="ChEBI" id="CHEBI:58937"/>
    </ligand>
</feature>
<feature type="binding site" evidence="1">
    <location>
        <position position="180"/>
    </location>
    <ligand>
        <name>Mg(2+)</name>
        <dbReference type="ChEBI" id="CHEBI:18420"/>
    </ligand>
</feature>
<feature type="binding site" evidence="1">
    <location>
        <position position="180"/>
    </location>
    <ligand>
        <name>thiamine diphosphate</name>
        <dbReference type="ChEBI" id="CHEBI:58937"/>
    </ligand>
</feature>
<feature type="binding site" evidence="1">
    <location>
        <position position="289"/>
    </location>
    <ligand>
        <name>thiamine diphosphate</name>
        <dbReference type="ChEBI" id="CHEBI:58937"/>
    </ligand>
</feature>
<feature type="binding site" evidence="1">
    <location>
        <position position="371"/>
    </location>
    <ligand>
        <name>thiamine diphosphate</name>
        <dbReference type="ChEBI" id="CHEBI:58937"/>
    </ligand>
</feature>
<reference key="1">
    <citation type="journal article" date="2004" name="Proc. Natl. Acad. Sci. U.S.A.">
        <title>The louse-borne human pathogen Bartonella quintana is a genomic derivative of the zoonotic agent Bartonella henselae.</title>
        <authorList>
            <person name="Alsmark U.C.M."/>
            <person name="Frank A.C."/>
            <person name="Karlberg E.O."/>
            <person name="Legault B.-A."/>
            <person name="Ardell D.H."/>
            <person name="Canbaeck B."/>
            <person name="Eriksson A.-S."/>
            <person name="Naeslund A.K."/>
            <person name="Handley S.A."/>
            <person name="Huvet M."/>
            <person name="La Scola B."/>
            <person name="Holmberg M."/>
            <person name="Andersson S.G.E."/>
        </authorList>
    </citation>
    <scope>NUCLEOTIDE SEQUENCE [LARGE SCALE GENOMIC DNA]</scope>
    <source>
        <strain>ATCC 49882 / DSM 28221 / CCUG 30454 / Houston 1</strain>
    </source>
</reference>
<protein>
    <recommendedName>
        <fullName evidence="1">1-deoxy-D-xylulose-5-phosphate synthase</fullName>
        <ecNumber evidence="1">2.2.1.7</ecNumber>
    </recommendedName>
    <alternativeName>
        <fullName evidence="1">1-deoxyxylulose-5-phosphate synthase</fullName>
        <shortName evidence="1">DXP synthase</shortName>
        <shortName evidence="1">DXPS</shortName>
    </alternativeName>
</protein>
<keyword id="KW-0414">Isoprene biosynthesis</keyword>
<keyword id="KW-0460">Magnesium</keyword>
<keyword id="KW-0479">Metal-binding</keyword>
<keyword id="KW-0784">Thiamine biosynthesis</keyword>
<keyword id="KW-0786">Thiamine pyrophosphate</keyword>
<keyword id="KW-0808">Transferase</keyword>
<gene>
    <name evidence="1" type="primary">dxs</name>
    <name type="ordered locus">BH04350</name>
</gene>
<name>DXS_BARHE</name>
<organism>
    <name type="scientific">Bartonella henselae (strain ATCC 49882 / DSM 28221 / CCUG 30454 / Houston 1)</name>
    <name type="common">Rochalimaea henselae</name>
    <dbReference type="NCBI Taxonomy" id="283166"/>
    <lineage>
        <taxon>Bacteria</taxon>
        <taxon>Pseudomonadati</taxon>
        <taxon>Pseudomonadota</taxon>
        <taxon>Alphaproteobacteria</taxon>
        <taxon>Hyphomicrobiales</taxon>
        <taxon>Bartonellaceae</taxon>
        <taxon>Bartonella</taxon>
    </lineage>
</organism>
<accession>Q6G4D1</accession>
<comment type="function">
    <text evidence="1">Catalyzes the acyloin condensation reaction between C atoms 2 and 3 of pyruvate and glyceraldehyde 3-phosphate to yield 1-deoxy-D-xylulose-5-phosphate (DXP).</text>
</comment>
<comment type="catalytic activity">
    <reaction evidence="1">
        <text>D-glyceraldehyde 3-phosphate + pyruvate + H(+) = 1-deoxy-D-xylulose 5-phosphate + CO2</text>
        <dbReference type="Rhea" id="RHEA:12605"/>
        <dbReference type="ChEBI" id="CHEBI:15361"/>
        <dbReference type="ChEBI" id="CHEBI:15378"/>
        <dbReference type="ChEBI" id="CHEBI:16526"/>
        <dbReference type="ChEBI" id="CHEBI:57792"/>
        <dbReference type="ChEBI" id="CHEBI:59776"/>
        <dbReference type="EC" id="2.2.1.7"/>
    </reaction>
</comment>
<comment type="cofactor">
    <cofactor evidence="1">
        <name>Mg(2+)</name>
        <dbReference type="ChEBI" id="CHEBI:18420"/>
    </cofactor>
    <text evidence="1">Binds 1 Mg(2+) ion per subunit.</text>
</comment>
<comment type="cofactor">
    <cofactor evidence="1">
        <name>thiamine diphosphate</name>
        <dbReference type="ChEBI" id="CHEBI:58937"/>
    </cofactor>
    <text evidence="1">Binds 1 thiamine pyrophosphate per subunit.</text>
</comment>
<comment type="pathway">
    <text evidence="1">Metabolic intermediate biosynthesis; 1-deoxy-D-xylulose 5-phosphate biosynthesis; 1-deoxy-D-xylulose 5-phosphate from D-glyceraldehyde 3-phosphate and pyruvate: step 1/1.</text>
</comment>
<comment type="subunit">
    <text evidence="1">Homodimer.</text>
</comment>
<comment type="similarity">
    <text evidence="1">Belongs to the transketolase family. DXPS subfamily.</text>
</comment>
<evidence type="ECO:0000255" key="1">
    <source>
        <dbReference type="HAMAP-Rule" id="MF_00315"/>
    </source>
</evidence>
<dbReference type="EC" id="2.2.1.7" evidence="1"/>
<dbReference type="EMBL" id="BX897699">
    <property type="protein sequence ID" value="CAF27244.1"/>
    <property type="molecule type" value="Genomic_DNA"/>
</dbReference>
<dbReference type="RefSeq" id="WP_011180368.1">
    <property type="nucleotide sequence ID" value="NZ_LRIJ02000001.1"/>
</dbReference>
<dbReference type="SMR" id="Q6G4D1"/>
<dbReference type="PaxDb" id="283166-BH04350"/>
<dbReference type="EnsemblBacteria" id="CAF27244">
    <property type="protein sequence ID" value="CAF27244"/>
    <property type="gene ID" value="BH04350"/>
</dbReference>
<dbReference type="GeneID" id="92985093"/>
<dbReference type="KEGG" id="bhe:BH04350"/>
<dbReference type="eggNOG" id="COG1154">
    <property type="taxonomic scope" value="Bacteria"/>
</dbReference>
<dbReference type="OrthoDB" id="9803371at2"/>
<dbReference type="UniPathway" id="UPA00064">
    <property type="reaction ID" value="UER00091"/>
</dbReference>
<dbReference type="Proteomes" id="UP000000421">
    <property type="component" value="Chromosome"/>
</dbReference>
<dbReference type="GO" id="GO:0008661">
    <property type="term" value="F:1-deoxy-D-xylulose-5-phosphate synthase activity"/>
    <property type="evidence" value="ECO:0007669"/>
    <property type="project" value="UniProtKB-UniRule"/>
</dbReference>
<dbReference type="GO" id="GO:0000287">
    <property type="term" value="F:magnesium ion binding"/>
    <property type="evidence" value="ECO:0007669"/>
    <property type="project" value="UniProtKB-UniRule"/>
</dbReference>
<dbReference type="GO" id="GO:0030976">
    <property type="term" value="F:thiamine pyrophosphate binding"/>
    <property type="evidence" value="ECO:0007669"/>
    <property type="project" value="UniProtKB-UniRule"/>
</dbReference>
<dbReference type="GO" id="GO:0052865">
    <property type="term" value="P:1-deoxy-D-xylulose 5-phosphate biosynthetic process"/>
    <property type="evidence" value="ECO:0007669"/>
    <property type="project" value="UniProtKB-UniPathway"/>
</dbReference>
<dbReference type="GO" id="GO:0019682">
    <property type="term" value="P:glyceraldehyde-3-phosphate metabolic process"/>
    <property type="evidence" value="ECO:0007669"/>
    <property type="project" value="UniProtKB-ARBA"/>
</dbReference>
<dbReference type="GO" id="GO:0016114">
    <property type="term" value="P:terpenoid biosynthetic process"/>
    <property type="evidence" value="ECO:0007669"/>
    <property type="project" value="UniProtKB-UniRule"/>
</dbReference>
<dbReference type="GO" id="GO:0009228">
    <property type="term" value="P:thiamine biosynthetic process"/>
    <property type="evidence" value="ECO:0007669"/>
    <property type="project" value="UniProtKB-UniRule"/>
</dbReference>
<dbReference type="CDD" id="cd02007">
    <property type="entry name" value="TPP_DXS"/>
    <property type="match status" value="1"/>
</dbReference>
<dbReference type="CDD" id="cd07033">
    <property type="entry name" value="TPP_PYR_DXS_TK_like"/>
    <property type="match status" value="1"/>
</dbReference>
<dbReference type="FunFam" id="3.40.50.920:FF:000002">
    <property type="entry name" value="1-deoxy-D-xylulose-5-phosphate synthase"/>
    <property type="match status" value="1"/>
</dbReference>
<dbReference type="FunFam" id="3.40.50.970:FF:000005">
    <property type="entry name" value="1-deoxy-D-xylulose-5-phosphate synthase"/>
    <property type="match status" value="1"/>
</dbReference>
<dbReference type="Gene3D" id="3.40.50.920">
    <property type="match status" value="1"/>
</dbReference>
<dbReference type="Gene3D" id="3.40.50.970">
    <property type="match status" value="2"/>
</dbReference>
<dbReference type="HAMAP" id="MF_00315">
    <property type="entry name" value="DXP_synth"/>
    <property type="match status" value="1"/>
</dbReference>
<dbReference type="InterPro" id="IPR005477">
    <property type="entry name" value="Dxylulose-5-P_synthase"/>
</dbReference>
<dbReference type="InterPro" id="IPR029061">
    <property type="entry name" value="THDP-binding"/>
</dbReference>
<dbReference type="InterPro" id="IPR009014">
    <property type="entry name" value="Transketo_C/PFOR_II"/>
</dbReference>
<dbReference type="InterPro" id="IPR005475">
    <property type="entry name" value="Transketolase-like_Pyr-bd"/>
</dbReference>
<dbReference type="InterPro" id="IPR033248">
    <property type="entry name" value="Transketolase_C"/>
</dbReference>
<dbReference type="InterPro" id="IPR049557">
    <property type="entry name" value="Transketolase_CS"/>
</dbReference>
<dbReference type="NCBIfam" id="TIGR00204">
    <property type="entry name" value="dxs"/>
    <property type="match status" value="1"/>
</dbReference>
<dbReference type="NCBIfam" id="NF003933">
    <property type="entry name" value="PRK05444.2-2"/>
    <property type="match status" value="1"/>
</dbReference>
<dbReference type="PANTHER" id="PTHR43322">
    <property type="entry name" value="1-D-DEOXYXYLULOSE 5-PHOSPHATE SYNTHASE-RELATED"/>
    <property type="match status" value="1"/>
</dbReference>
<dbReference type="PANTHER" id="PTHR43322:SF5">
    <property type="entry name" value="1-DEOXY-D-XYLULOSE-5-PHOSPHATE SYNTHASE, CHLOROPLASTIC"/>
    <property type="match status" value="1"/>
</dbReference>
<dbReference type="Pfam" id="PF13292">
    <property type="entry name" value="DXP_synthase_N"/>
    <property type="match status" value="1"/>
</dbReference>
<dbReference type="Pfam" id="PF02779">
    <property type="entry name" value="Transket_pyr"/>
    <property type="match status" value="1"/>
</dbReference>
<dbReference type="Pfam" id="PF02780">
    <property type="entry name" value="Transketolase_C"/>
    <property type="match status" value="1"/>
</dbReference>
<dbReference type="SMART" id="SM00861">
    <property type="entry name" value="Transket_pyr"/>
    <property type="match status" value="1"/>
</dbReference>
<dbReference type="SUPFAM" id="SSF52518">
    <property type="entry name" value="Thiamin diphosphate-binding fold (THDP-binding)"/>
    <property type="match status" value="2"/>
</dbReference>
<dbReference type="SUPFAM" id="SSF52922">
    <property type="entry name" value="TK C-terminal domain-like"/>
    <property type="match status" value="1"/>
</dbReference>
<dbReference type="PROSITE" id="PS00801">
    <property type="entry name" value="TRANSKETOLASE_1"/>
    <property type="match status" value="1"/>
</dbReference>